<gene>
    <name type="primary">mnhC2</name>
    <name type="synonym">mrpC2</name>
    <name type="ordered locus">SAR0632</name>
</gene>
<protein>
    <recommendedName>
        <fullName>Putative antiporter subunit mnhC2</fullName>
    </recommendedName>
    <alternativeName>
        <fullName>Mrp complex subunit C2</fullName>
    </alternativeName>
    <alternativeName>
        <fullName>Putative NADH-ubiquinone oxidoreductase subunit mnhC2</fullName>
    </alternativeName>
</protein>
<accession>Q6GJ45</accession>
<evidence type="ECO:0000250" key="1"/>
<evidence type="ECO:0000255" key="2"/>
<evidence type="ECO:0000305" key="3"/>
<organism>
    <name type="scientific">Staphylococcus aureus (strain MRSA252)</name>
    <dbReference type="NCBI Taxonomy" id="282458"/>
    <lineage>
        <taxon>Bacteria</taxon>
        <taxon>Bacillati</taxon>
        <taxon>Bacillota</taxon>
        <taxon>Bacilli</taxon>
        <taxon>Bacillales</taxon>
        <taxon>Staphylococcaceae</taxon>
        <taxon>Staphylococcus</taxon>
    </lineage>
</organism>
<feature type="chain" id="PRO_0000372252" description="Putative antiporter subunit mnhC2">
    <location>
        <begin position="1"/>
        <end position="114"/>
    </location>
</feature>
<feature type="transmembrane region" description="Helical" evidence="2">
    <location>
        <begin position="3"/>
        <end position="23"/>
    </location>
</feature>
<feature type="transmembrane region" description="Helical" evidence="2">
    <location>
        <begin position="28"/>
        <end position="48"/>
    </location>
</feature>
<feature type="transmembrane region" description="Helical" evidence="2">
    <location>
        <begin position="72"/>
        <end position="92"/>
    </location>
</feature>
<proteinExistence type="inferred from homology"/>
<dbReference type="EMBL" id="BX571856">
    <property type="protein sequence ID" value="CAG39650.1"/>
    <property type="molecule type" value="Genomic_DNA"/>
</dbReference>
<dbReference type="RefSeq" id="WP_001048982.1">
    <property type="nucleotide sequence ID" value="NC_002952.2"/>
</dbReference>
<dbReference type="SMR" id="Q6GJ45"/>
<dbReference type="KEGG" id="sar:SAR0632"/>
<dbReference type="HOGENOM" id="CLU_082058_3_1_9"/>
<dbReference type="Proteomes" id="UP000000596">
    <property type="component" value="Chromosome"/>
</dbReference>
<dbReference type="GO" id="GO:0005886">
    <property type="term" value="C:plasma membrane"/>
    <property type="evidence" value="ECO:0007669"/>
    <property type="project" value="UniProtKB-SubCell"/>
</dbReference>
<dbReference type="GO" id="GO:0015297">
    <property type="term" value="F:antiporter activity"/>
    <property type="evidence" value="ECO:0007669"/>
    <property type="project" value="UniProtKB-KW"/>
</dbReference>
<dbReference type="GO" id="GO:0006811">
    <property type="term" value="P:monoatomic ion transport"/>
    <property type="evidence" value="ECO:0007669"/>
    <property type="project" value="UniProtKB-KW"/>
</dbReference>
<dbReference type="Gene3D" id="1.10.287.3510">
    <property type="match status" value="1"/>
</dbReference>
<dbReference type="InterPro" id="IPR050601">
    <property type="entry name" value="CPA3_antiporter_subunitC"/>
</dbReference>
<dbReference type="InterPro" id="IPR039428">
    <property type="entry name" value="NUOK/Mnh_C1-like"/>
</dbReference>
<dbReference type="NCBIfam" id="NF009303">
    <property type="entry name" value="PRK12660.1"/>
    <property type="match status" value="1"/>
</dbReference>
<dbReference type="PANTHER" id="PTHR34583">
    <property type="entry name" value="ANTIPORTER SUBUNIT MNHC2-RELATED"/>
    <property type="match status" value="1"/>
</dbReference>
<dbReference type="PANTHER" id="PTHR34583:SF2">
    <property type="entry name" value="ANTIPORTER SUBUNIT MNHC2-RELATED"/>
    <property type="match status" value="1"/>
</dbReference>
<dbReference type="Pfam" id="PF00420">
    <property type="entry name" value="Oxidored_q2"/>
    <property type="match status" value="1"/>
</dbReference>
<reference key="1">
    <citation type="journal article" date="2004" name="Proc. Natl. Acad. Sci. U.S.A.">
        <title>Complete genomes of two clinical Staphylococcus aureus strains: evidence for the rapid evolution of virulence and drug resistance.</title>
        <authorList>
            <person name="Holden M.T.G."/>
            <person name="Feil E.J."/>
            <person name="Lindsay J.A."/>
            <person name="Peacock S.J."/>
            <person name="Day N.P.J."/>
            <person name="Enright M.C."/>
            <person name="Foster T.J."/>
            <person name="Moore C.E."/>
            <person name="Hurst L."/>
            <person name="Atkin R."/>
            <person name="Barron A."/>
            <person name="Bason N."/>
            <person name="Bentley S.D."/>
            <person name="Chillingworth C."/>
            <person name="Chillingworth T."/>
            <person name="Churcher C."/>
            <person name="Clark L."/>
            <person name="Corton C."/>
            <person name="Cronin A."/>
            <person name="Doggett J."/>
            <person name="Dowd L."/>
            <person name="Feltwell T."/>
            <person name="Hance Z."/>
            <person name="Harris B."/>
            <person name="Hauser H."/>
            <person name="Holroyd S."/>
            <person name="Jagels K."/>
            <person name="James K.D."/>
            <person name="Lennard N."/>
            <person name="Line A."/>
            <person name="Mayes R."/>
            <person name="Moule S."/>
            <person name="Mungall K."/>
            <person name="Ormond D."/>
            <person name="Quail M.A."/>
            <person name="Rabbinowitsch E."/>
            <person name="Rutherford K.M."/>
            <person name="Sanders M."/>
            <person name="Sharp S."/>
            <person name="Simmonds M."/>
            <person name="Stevens K."/>
            <person name="Whitehead S."/>
            <person name="Barrell B.G."/>
            <person name="Spratt B.G."/>
            <person name="Parkhill J."/>
        </authorList>
    </citation>
    <scope>NUCLEOTIDE SEQUENCE [LARGE SCALE GENOMIC DNA]</scope>
    <source>
        <strain>MRSA252</strain>
    </source>
</reference>
<sequence>MNLILLLVIGFLVFIGTYMILSINLIRIVIGISIYTHAGNLIIMSMGTYGSNKSEPLITGGNQLFVDPLLQAIVLTAIVIGFGMTAFLLVLVYRTYKVTKEDEIEGLRGEDDAK</sequence>
<name>MNHC2_STAAR</name>
<comment type="subunit">
    <text evidence="1">May form a heterooligomeric complex that consists of seven subunits: mnhA2, mnhB2, mnhC2, mnhD2, mnhE2, mnhF2 and mnhG2.</text>
</comment>
<comment type="subcellular location">
    <subcellularLocation>
        <location evidence="3">Cell membrane</location>
        <topology evidence="3">Multi-pass membrane protein</topology>
    </subcellularLocation>
</comment>
<comment type="similarity">
    <text evidence="3">Belongs to the CPA3 antiporters (TC 2.A.63) subunit C family.</text>
</comment>
<keyword id="KW-0050">Antiport</keyword>
<keyword id="KW-1003">Cell membrane</keyword>
<keyword id="KW-0406">Ion transport</keyword>
<keyword id="KW-0472">Membrane</keyword>
<keyword id="KW-0812">Transmembrane</keyword>
<keyword id="KW-1133">Transmembrane helix</keyword>
<keyword id="KW-0813">Transport</keyword>